<dbReference type="EMBL" id="CP001172">
    <property type="protein sequence ID" value="ACJ57471.1"/>
    <property type="molecule type" value="Genomic_DNA"/>
</dbReference>
<dbReference type="RefSeq" id="WP_001229360.1">
    <property type="nucleotide sequence ID" value="NZ_CP001172.1"/>
</dbReference>
<dbReference type="SMR" id="B7H1J9"/>
<dbReference type="GeneID" id="92892283"/>
<dbReference type="HOGENOM" id="CLU_086499_3_2_6"/>
<dbReference type="Proteomes" id="UP000006924">
    <property type="component" value="Chromosome"/>
</dbReference>
<dbReference type="GO" id="GO:0022625">
    <property type="term" value="C:cytosolic large ribosomal subunit"/>
    <property type="evidence" value="ECO:0007669"/>
    <property type="project" value="TreeGrafter"/>
</dbReference>
<dbReference type="GO" id="GO:0003729">
    <property type="term" value="F:mRNA binding"/>
    <property type="evidence" value="ECO:0007669"/>
    <property type="project" value="TreeGrafter"/>
</dbReference>
<dbReference type="GO" id="GO:0003735">
    <property type="term" value="F:structural constituent of ribosome"/>
    <property type="evidence" value="ECO:0007669"/>
    <property type="project" value="InterPro"/>
</dbReference>
<dbReference type="GO" id="GO:0006412">
    <property type="term" value="P:translation"/>
    <property type="evidence" value="ECO:0007669"/>
    <property type="project" value="UniProtKB-UniRule"/>
</dbReference>
<dbReference type="CDD" id="cd00387">
    <property type="entry name" value="Ribosomal_L7_L12"/>
    <property type="match status" value="1"/>
</dbReference>
<dbReference type="FunFam" id="3.30.1390.10:FF:000001">
    <property type="entry name" value="50S ribosomal protein L7/L12"/>
    <property type="match status" value="1"/>
</dbReference>
<dbReference type="Gene3D" id="3.30.1390.10">
    <property type="match status" value="1"/>
</dbReference>
<dbReference type="Gene3D" id="1.20.5.710">
    <property type="entry name" value="Single helix bin"/>
    <property type="match status" value="1"/>
</dbReference>
<dbReference type="HAMAP" id="MF_00368">
    <property type="entry name" value="Ribosomal_bL12"/>
    <property type="match status" value="1"/>
</dbReference>
<dbReference type="InterPro" id="IPR000206">
    <property type="entry name" value="Ribosomal_bL12"/>
</dbReference>
<dbReference type="InterPro" id="IPR013823">
    <property type="entry name" value="Ribosomal_bL12_C"/>
</dbReference>
<dbReference type="InterPro" id="IPR014719">
    <property type="entry name" value="Ribosomal_bL12_C/ClpS-like"/>
</dbReference>
<dbReference type="InterPro" id="IPR008932">
    <property type="entry name" value="Ribosomal_bL12_oligo"/>
</dbReference>
<dbReference type="InterPro" id="IPR036235">
    <property type="entry name" value="Ribosomal_bL12_oligo_N_sf"/>
</dbReference>
<dbReference type="NCBIfam" id="TIGR00855">
    <property type="entry name" value="L12"/>
    <property type="match status" value="1"/>
</dbReference>
<dbReference type="PANTHER" id="PTHR45987">
    <property type="entry name" value="39S RIBOSOMAL PROTEIN L12"/>
    <property type="match status" value="1"/>
</dbReference>
<dbReference type="PANTHER" id="PTHR45987:SF4">
    <property type="entry name" value="LARGE RIBOSOMAL SUBUNIT PROTEIN BL12M"/>
    <property type="match status" value="1"/>
</dbReference>
<dbReference type="Pfam" id="PF00542">
    <property type="entry name" value="Ribosomal_L12"/>
    <property type="match status" value="1"/>
</dbReference>
<dbReference type="Pfam" id="PF16320">
    <property type="entry name" value="Ribosomal_L12_N"/>
    <property type="match status" value="1"/>
</dbReference>
<dbReference type="SUPFAM" id="SSF54736">
    <property type="entry name" value="ClpS-like"/>
    <property type="match status" value="1"/>
</dbReference>
<dbReference type="SUPFAM" id="SSF48300">
    <property type="entry name" value="Ribosomal protein L7/12, oligomerisation (N-terminal) domain"/>
    <property type="match status" value="1"/>
</dbReference>
<comment type="function">
    <text evidence="1">Forms part of the ribosomal stalk which helps the ribosome interact with GTP-bound translation factors. Is thus essential for accurate translation.</text>
</comment>
<comment type="subunit">
    <text evidence="1">Homodimer. Part of the ribosomal stalk of the 50S ribosomal subunit. Forms a multimeric L10(L12)X complex, where L10 forms an elongated spine to which 2 to 4 L12 dimers bind in a sequential fashion. Binds GTP-bound translation factors.</text>
</comment>
<comment type="similarity">
    <text evidence="1">Belongs to the bacterial ribosomal protein bL12 family.</text>
</comment>
<feature type="chain" id="PRO_1000121374" description="Large ribosomal subunit protein bL12">
    <location>
        <begin position="1"/>
        <end position="123"/>
    </location>
</feature>
<proteinExistence type="inferred from homology"/>
<keyword id="KW-0687">Ribonucleoprotein</keyword>
<keyword id="KW-0689">Ribosomal protein</keyword>
<name>RL7_ACIB3</name>
<gene>
    <name evidence="1" type="primary">rplL</name>
    <name type="ordered locus">ABBFA_003249</name>
</gene>
<reference key="1">
    <citation type="journal article" date="2008" name="J. Bacteriol.">
        <title>Comparative genome sequence analysis of multidrug-resistant Acinetobacter baumannii.</title>
        <authorList>
            <person name="Adams M.D."/>
            <person name="Goglin K."/>
            <person name="Molyneaux N."/>
            <person name="Hujer K.M."/>
            <person name="Lavender H."/>
            <person name="Jamison J.J."/>
            <person name="MacDonald I.J."/>
            <person name="Martin K.M."/>
            <person name="Russo T."/>
            <person name="Campagnari A.A."/>
            <person name="Hujer A.M."/>
            <person name="Bonomo R.A."/>
            <person name="Gill S.R."/>
        </authorList>
    </citation>
    <scope>NUCLEOTIDE SEQUENCE [LARGE SCALE GENOMIC DNA]</scope>
    <source>
        <strain>AB307-0294</strain>
    </source>
</reference>
<protein>
    <recommendedName>
        <fullName evidence="1">Large ribosomal subunit protein bL12</fullName>
    </recommendedName>
    <alternativeName>
        <fullName evidence="2">50S ribosomal protein L7/L12</fullName>
    </alternativeName>
</protein>
<sequence length="123" mass="12740">MALTNEEILNAVAEKTVLELVELISAFEEKFNVSAAAVAVAAPAGGAAAAAEEQSEFNVELTSFGANKVAVIKAVREATGLGLKEAKDLVEGAPQVLKEGVSKEEGEELKKKLEEAGATVTLK</sequence>
<organism>
    <name type="scientific">Acinetobacter baumannii (strain AB307-0294)</name>
    <dbReference type="NCBI Taxonomy" id="557600"/>
    <lineage>
        <taxon>Bacteria</taxon>
        <taxon>Pseudomonadati</taxon>
        <taxon>Pseudomonadota</taxon>
        <taxon>Gammaproteobacteria</taxon>
        <taxon>Moraxellales</taxon>
        <taxon>Moraxellaceae</taxon>
        <taxon>Acinetobacter</taxon>
        <taxon>Acinetobacter calcoaceticus/baumannii complex</taxon>
    </lineage>
</organism>
<evidence type="ECO:0000255" key="1">
    <source>
        <dbReference type="HAMAP-Rule" id="MF_00368"/>
    </source>
</evidence>
<evidence type="ECO:0000305" key="2"/>
<accession>B7H1J9</accession>